<comment type="function">
    <text evidence="1">Protein S19 forms a complex with S13 that binds strongly to the 16S ribosomal RNA.</text>
</comment>
<comment type="similarity">
    <text evidence="1">Belongs to the universal ribosomal protein uS19 family.</text>
</comment>
<accession>B9DYB3</accession>
<organism>
    <name type="scientific">Clostridium kluyveri (strain NBRC 12016)</name>
    <dbReference type="NCBI Taxonomy" id="583346"/>
    <lineage>
        <taxon>Bacteria</taxon>
        <taxon>Bacillati</taxon>
        <taxon>Bacillota</taxon>
        <taxon>Clostridia</taxon>
        <taxon>Eubacteriales</taxon>
        <taxon>Clostridiaceae</taxon>
        <taxon>Clostridium</taxon>
    </lineage>
</organism>
<dbReference type="EMBL" id="AP009049">
    <property type="protein sequence ID" value="BAH05238.1"/>
    <property type="molecule type" value="Genomic_DNA"/>
</dbReference>
<dbReference type="RefSeq" id="WP_011988807.1">
    <property type="nucleotide sequence ID" value="NC_011837.1"/>
</dbReference>
<dbReference type="SMR" id="B9DYB3"/>
<dbReference type="KEGG" id="ckr:CKR_0187"/>
<dbReference type="HOGENOM" id="CLU_144911_0_1_9"/>
<dbReference type="Proteomes" id="UP000007969">
    <property type="component" value="Chromosome"/>
</dbReference>
<dbReference type="GO" id="GO:0005737">
    <property type="term" value="C:cytoplasm"/>
    <property type="evidence" value="ECO:0007669"/>
    <property type="project" value="UniProtKB-ARBA"/>
</dbReference>
<dbReference type="GO" id="GO:0015935">
    <property type="term" value="C:small ribosomal subunit"/>
    <property type="evidence" value="ECO:0007669"/>
    <property type="project" value="InterPro"/>
</dbReference>
<dbReference type="GO" id="GO:0019843">
    <property type="term" value="F:rRNA binding"/>
    <property type="evidence" value="ECO:0007669"/>
    <property type="project" value="UniProtKB-UniRule"/>
</dbReference>
<dbReference type="GO" id="GO:0003735">
    <property type="term" value="F:structural constituent of ribosome"/>
    <property type="evidence" value="ECO:0007669"/>
    <property type="project" value="InterPro"/>
</dbReference>
<dbReference type="GO" id="GO:0000028">
    <property type="term" value="P:ribosomal small subunit assembly"/>
    <property type="evidence" value="ECO:0007669"/>
    <property type="project" value="TreeGrafter"/>
</dbReference>
<dbReference type="GO" id="GO:0006412">
    <property type="term" value="P:translation"/>
    <property type="evidence" value="ECO:0007669"/>
    <property type="project" value="UniProtKB-UniRule"/>
</dbReference>
<dbReference type="FunFam" id="3.30.860.10:FF:000001">
    <property type="entry name" value="30S ribosomal protein S19"/>
    <property type="match status" value="1"/>
</dbReference>
<dbReference type="Gene3D" id="3.30.860.10">
    <property type="entry name" value="30s Ribosomal Protein S19, Chain A"/>
    <property type="match status" value="1"/>
</dbReference>
<dbReference type="HAMAP" id="MF_00531">
    <property type="entry name" value="Ribosomal_uS19"/>
    <property type="match status" value="1"/>
</dbReference>
<dbReference type="InterPro" id="IPR002222">
    <property type="entry name" value="Ribosomal_uS19"/>
</dbReference>
<dbReference type="InterPro" id="IPR005732">
    <property type="entry name" value="Ribosomal_uS19_bac-type"/>
</dbReference>
<dbReference type="InterPro" id="IPR020934">
    <property type="entry name" value="Ribosomal_uS19_CS"/>
</dbReference>
<dbReference type="InterPro" id="IPR023575">
    <property type="entry name" value="Ribosomal_uS19_SF"/>
</dbReference>
<dbReference type="NCBIfam" id="TIGR01050">
    <property type="entry name" value="rpsS_bact"/>
    <property type="match status" value="1"/>
</dbReference>
<dbReference type="PANTHER" id="PTHR11880">
    <property type="entry name" value="RIBOSOMAL PROTEIN S19P FAMILY MEMBER"/>
    <property type="match status" value="1"/>
</dbReference>
<dbReference type="PANTHER" id="PTHR11880:SF8">
    <property type="entry name" value="SMALL RIBOSOMAL SUBUNIT PROTEIN US19M"/>
    <property type="match status" value="1"/>
</dbReference>
<dbReference type="Pfam" id="PF00203">
    <property type="entry name" value="Ribosomal_S19"/>
    <property type="match status" value="1"/>
</dbReference>
<dbReference type="PIRSF" id="PIRSF002144">
    <property type="entry name" value="Ribosomal_S19"/>
    <property type="match status" value="1"/>
</dbReference>
<dbReference type="PRINTS" id="PR00975">
    <property type="entry name" value="RIBOSOMALS19"/>
</dbReference>
<dbReference type="SUPFAM" id="SSF54570">
    <property type="entry name" value="Ribosomal protein S19"/>
    <property type="match status" value="1"/>
</dbReference>
<dbReference type="PROSITE" id="PS00323">
    <property type="entry name" value="RIBOSOMAL_S19"/>
    <property type="match status" value="1"/>
</dbReference>
<keyword id="KW-0687">Ribonucleoprotein</keyword>
<keyword id="KW-0689">Ribosomal protein</keyword>
<keyword id="KW-0694">RNA-binding</keyword>
<keyword id="KW-0699">rRNA-binding</keyword>
<reference key="1">
    <citation type="submission" date="2005-09" db="EMBL/GenBank/DDBJ databases">
        <title>Complete genome sequence of Clostridium kluyveri and comparative genomics of Clostridia species.</title>
        <authorList>
            <person name="Inui M."/>
            <person name="Nonaka H."/>
            <person name="Shinoda Y."/>
            <person name="Ikenaga Y."/>
            <person name="Abe M."/>
            <person name="Naito K."/>
            <person name="Vertes A.A."/>
            <person name="Yukawa H."/>
        </authorList>
    </citation>
    <scope>NUCLEOTIDE SEQUENCE [LARGE SCALE GENOMIC DNA]</scope>
    <source>
        <strain>NBRC 12016</strain>
    </source>
</reference>
<sequence length="95" mass="10906">MSRSVKKGPYVQESLLKKINELNKKGEKKVIKTWSRSSTIFPQMIGHTIAVHDGRKHVPVYISEDMVGHKLGEFALTRTYRGHVNKTEKTTRVSR</sequence>
<proteinExistence type="inferred from homology"/>
<protein>
    <recommendedName>
        <fullName evidence="1">Small ribosomal subunit protein uS19</fullName>
    </recommendedName>
    <alternativeName>
        <fullName evidence="2">30S ribosomal protein S19</fullName>
    </alternativeName>
</protein>
<feature type="chain" id="PRO_1000146382" description="Small ribosomal subunit protein uS19">
    <location>
        <begin position="1"/>
        <end position="95"/>
    </location>
</feature>
<gene>
    <name evidence="1" type="primary">rpsS</name>
    <name type="ordered locus">CKR_0187</name>
</gene>
<name>RS19_CLOK1</name>
<evidence type="ECO:0000255" key="1">
    <source>
        <dbReference type="HAMAP-Rule" id="MF_00531"/>
    </source>
</evidence>
<evidence type="ECO:0000305" key="2"/>